<evidence type="ECO:0000255" key="1">
    <source>
        <dbReference type="HAMAP-Rule" id="MF_00532"/>
    </source>
</evidence>
<evidence type="ECO:0000305" key="2"/>
<keyword id="KW-0687">Ribonucleoprotein</keyword>
<keyword id="KW-0689">Ribosomal protein</keyword>
<sequence length="130" mass="14510">MIGNWNYGTGRRKTSVARVFIKKGSGKIVVNGKPVDEFFARETGRMIVRQPLELTGHLESFDIKVNVHGGGETGQAGAVRHGITRALIDYDAALKPALSQAGFVTRDAREVERKKVGFRKARRRKQFSKR</sequence>
<protein>
    <recommendedName>
        <fullName evidence="1">Small ribosomal subunit protein uS9</fullName>
    </recommendedName>
    <alternativeName>
        <fullName evidence="2">30S ribosomal protein S9</fullName>
    </alternativeName>
</protein>
<reference key="1">
    <citation type="journal article" date="2003" name="Nat. Genet.">
        <title>Comparative analysis of the genome sequences of Bordetella pertussis, Bordetella parapertussis and Bordetella bronchiseptica.</title>
        <authorList>
            <person name="Parkhill J."/>
            <person name="Sebaihia M."/>
            <person name="Preston A."/>
            <person name="Murphy L.D."/>
            <person name="Thomson N.R."/>
            <person name="Harris D.E."/>
            <person name="Holden M.T.G."/>
            <person name="Churcher C.M."/>
            <person name="Bentley S.D."/>
            <person name="Mungall K.L."/>
            <person name="Cerdeno-Tarraga A.-M."/>
            <person name="Temple L."/>
            <person name="James K.D."/>
            <person name="Harris B."/>
            <person name="Quail M.A."/>
            <person name="Achtman M."/>
            <person name="Atkin R."/>
            <person name="Baker S."/>
            <person name="Basham D."/>
            <person name="Bason N."/>
            <person name="Cherevach I."/>
            <person name="Chillingworth T."/>
            <person name="Collins M."/>
            <person name="Cronin A."/>
            <person name="Davis P."/>
            <person name="Doggett J."/>
            <person name="Feltwell T."/>
            <person name="Goble A."/>
            <person name="Hamlin N."/>
            <person name="Hauser H."/>
            <person name="Holroyd S."/>
            <person name="Jagels K."/>
            <person name="Leather S."/>
            <person name="Moule S."/>
            <person name="Norberczak H."/>
            <person name="O'Neil S."/>
            <person name="Ormond D."/>
            <person name="Price C."/>
            <person name="Rabbinowitsch E."/>
            <person name="Rutter S."/>
            <person name="Sanders M."/>
            <person name="Saunders D."/>
            <person name="Seeger K."/>
            <person name="Sharp S."/>
            <person name="Simmonds M."/>
            <person name="Skelton J."/>
            <person name="Squares R."/>
            <person name="Squares S."/>
            <person name="Stevens K."/>
            <person name="Unwin L."/>
            <person name="Whitehead S."/>
            <person name="Barrell B.G."/>
            <person name="Maskell D.J."/>
        </authorList>
    </citation>
    <scope>NUCLEOTIDE SEQUENCE [LARGE SCALE GENOMIC DNA]</scope>
    <source>
        <strain>ATCC BAA-588 / NCTC 13252 / RB50</strain>
    </source>
</reference>
<gene>
    <name evidence="1" type="primary">rpsI</name>
    <name type="ordered locus">BB4356</name>
</gene>
<dbReference type="EMBL" id="BX640450">
    <property type="protein sequence ID" value="CAE34719.1"/>
    <property type="molecule type" value="Genomic_DNA"/>
</dbReference>
<dbReference type="RefSeq" id="WP_003814889.1">
    <property type="nucleotide sequence ID" value="NC_002927.3"/>
</dbReference>
<dbReference type="SMR" id="Q7WFC4"/>
<dbReference type="GeneID" id="56477144"/>
<dbReference type="KEGG" id="bbr:BB4356"/>
<dbReference type="eggNOG" id="COG0103">
    <property type="taxonomic scope" value="Bacteria"/>
</dbReference>
<dbReference type="HOGENOM" id="CLU_046483_2_1_4"/>
<dbReference type="Proteomes" id="UP000001027">
    <property type="component" value="Chromosome"/>
</dbReference>
<dbReference type="GO" id="GO:0022627">
    <property type="term" value="C:cytosolic small ribosomal subunit"/>
    <property type="evidence" value="ECO:0007669"/>
    <property type="project" value="TreeGrafter"/>
</dbReference>
<dbReference type="GO" id="GO:0003723">
    <property type="term" value="F:RNA binding"/>
    <property type="evidence" value="ECO:0007669"/>
    <property type="project" value="TreeGrafter"/>
</dbReference>
<dbReference type="GO" id="GO:0003735">
    <property type="term" value="F:structural constituent of ribosome"/>
    <property type="evidence" value="ECO:0007669"/>
    <property type="project" value="InterPro"/>
</dbReference>
<dbReference type="GO" id="GO:0006412">
    <property type="term" value="P:translation"/>
    <property type="evidence" value="ECO:0007669"/>
    <property type="project" value="UniProtKB-UniRule"/>
</dbReference>
<dbReference type="FunFam" id="3.30.230.10:FF:000001">
    <property type="entry name" value="30S ribosomal protein S9"/>
    <property type="match status" value="1"/>
</dbReference>
<dbReference type="Gene3D" id="3.30.230.10">
    <property type="match status" value="1"/>
</dbReference>
<dbReference type="HAMAP" id="MF_00532_B">
    <property type="entry name" value="Ribosomal_uS9_B"/>
    <property type="match status" value="1"/>
</dbReference>
<dbReference type="InterPro" id="IPR020568">
    <property type="entry name" value="Ribosomal_Su5_D2-typ_SF"/>
</dbReference>
<dbReference type="InterPro" id="IPR000754">
    <property type="entry name" value="Ribosomal_uS9"/>
</dbReference>
<dbReference type="InterPro" id="IPR023035">
    <property type="entry name" value="Ribosomal_uS9_bac/plastid"/>
</dbReference>
<dbReference type="InterPro" id="IPR020574">
    <property type="entry name" value="Ribosomal_uS9_CS"/>
</dbReference>
<dbReference type="InterPro" id="IPR014721">
    <property type="entry name" value="Ribsml_uS5_D2-typ_fold_subgr"/>
</dbReference>
<dbReference type="NCBIfam" id="NF001099">
    <property type="entry name" value="PRK00132.1"/>
    <property type="match status" value="1"/>
</dbReference>
<dbReference type="PANTHER" id="PTHR21569">
    <property type="entry name" value="RIBOSOMAL PROTEIN S9"/>
    <property type="match status" value="1"/>
</dbReference>
<dbReference type="PANTHER" id="PTHR21569:SF1">
    <property type="entry name" value="SMALL RIBOSOMAL SUBUNIT PROTEIN US9M"/>
    <property type="match status" value="1"/>
</dbReference>
<dbReference type="Pfam" id="PF00380">
    <property type="entry name" value="Ribosomal_S9"/>
    <property type="match status" value="1"/>
</dbReference>
<dbReference type="SUPFAM" id="SSF54211">
    <property type="entry name" value="Ribosomal protein S5 domain 2-like"/>
    <property type="match status" value="1"/>
</dbReference>
<dbReference type="PROSITE" id="PS00360">
    <property type="entry name" value="RIBOSOMAL_S9"/>
    <property type="match status" value="1"/>
</dbReference>
<proteinExistence type="inferred from homology"/>
<organism>
    <name type="scientific">Bordetella bronchiseptica (strain ATCC BAA-588 / NCTC 13252 / RB50)</name>
    <name type="common">Alcaligenes bronchisepticus</name>
    <dbReference type="NCBI Taxonomy" id="257310"/>
    <lineage>
        <taxon>Bacteria</taxon>
        <taxon>Pseudomonadati</taxon>
        <taxon>Pseudomonadota</taxon>
        <taxon>Betaproteobacteria</taxon>
        <taxon>Burkholderiales</taxon>
        <taxon>Alcaligenaceae</taxon>
        <taxon>Bordetella</taxon>
    </lineage>
</organism>
<accession>Q7WFC4</accession>
<comment type="similarity">
    <text evidence="1">Belongs to the universal ribosomal protein uS9 family.</text>
</comment>
<name>RS9_BORBR</name>
<feature type="chain" id="PRO_0000111328" description="Small ribosomal subunit protein uS9">
    <location>
        <begin position="1"/>
        <end position="130"/>
    </location>
</feature>